<feature type="chain" id="PRO_0000332452" description="UDP-N-acetylenolpyruvoylglucosamine reductase">
    <location>
        <begin position="1"/>
        <end position="310"/>
    </location>
</feature>
<feature type="domain" description="FAD-binding PCMH-type" evidence="1">
    <location>
        <begin position="27"/>
        <end position="192"/>
    </location>
</feature>
<feature type="active site" evidence="1">
    <location>
        <position position="171"/>
    </location>
</feature>
<feature type="active site" description="Proton donor" evidence="1">
    <location>
        <position position="223"/>
    </location>
</feature>
<feature type="active site" evidence="1">
    <location>
        <position position="293"/>
    </location>
</feature>
<dbReference type="EC" id="1.3.1.98" evidence="1"/>
<dbReference type="EMBL" id="CP000679">
    <property type="protein sequence ID" value="ABP66764.1"/>
    <property type="molecule type" value="Genomic_DNA"/>
</dbReference>
<dbReference type="RefSeq" id="WP_011916703.1">
    <property type="nucleotide sequence ID" value="NC_009437.1"/>
</dbReference>
<dbReference type="SMR" id="A4XIM9"/>
<dbReference type="STRING" id="351627.Csac_1159"/>
<dbReference type="KEGG" id="csc:Csac_1159"/>
<dbReference type="eggNOG" id="COG0812">
    <property type="taxonomic scope" value="Bacteria"/>
</dbReference>
<dbReference type="HOGENOM" id="CLU_035304_1_1_9"/>
<dbReference type="OrthoDB" id="9804753at2"/>
<dbReference type="UniPathway" id="UPA00219"/>
<dbReference type="Proteomes" id="UP000000256">
    <property type="component" value="Chromosome"/>
</dbReference>
<dbReference type="GO" id="GO:0005829">
    <property type="term" value="C:cytosol"/>
    <property type="evidence" value="ECO:0007669"/>
    <property type="project" value="TreeGrafter"/>
</dbReference>
<dbReference type="GO" id="GO:0071949">
    <property type="term" value="F:FAD binding"/>
    <property type="evidence" value="ECO:0007669"/>
    <property type="project" value="InterPro"/>
</dbReference>
<dbReference type="GO" id="GO:0008762">
    <property type="term" value="F:UDP-N-acetylmuramate dehydrogenase activity"/>
    <property type="evidence" value="ECO:0007669"/>
    <property type="project" value="UniProtKB-UniRule"/>
</dbReference>
<dbReference type="GO" id="GO:0051301">
    <property type="term" value="P:cell division"/>
    <property type="evidence" value="ECO:0007669"/>
    <property type="project" value="UniProtKB-KW"/>
</dbReference>
<dbReference type="GO" id="GO:0071555">
    <property type="term" value="P:cell wall organization"/>
    <property type="evidence" value="ECO:0007669"/>
    <property type="project" value="UniProtKB-KW"/>
</dbReference>
<dbReference type="GO" id="GO:0009252">
    <property type="term" value="P:peptidoglycan biosynthetic process"/>
    <property type="evidence" value="ECO:0007669"/>
    <property type="project" value="UniProtKB-UniRule"/>
</dbReference>
<dbReference type="GO" id="GO:0008360">
    <property type="term" value="P:regulation of cell shape"/>
    <property type="evidence" value="ECO:0007669"/>
    <property type="project" value="UniProtKB-KW"/>
</dbReference>
<dbReference type="Gene3D" id="3.30.465.10">
    <property type="match status" value="1"/>
</dbReference>
<dbReference type="Gene3D" id="3.90.78.10">
    <property type="entry name" value="UDP-N-acetylenolpyruvoylglucosamine reductase, C-terminal domain"/>
    <property type="match status" value="1"/>
</dbReference>
<dbReference type="Gene3D" id="3.30.43.10">
    <property type="entry name" value="Uridine Diphospho-n-acetylenolpyruvylglucosamine Reductase, domain 2"/>
    <property type="match status" value="1"/>
</dbReference>
<dbReference type="HAMAP" id="MF_00037">
    <property type="entry name" value="MurB"/>
    <property type="match status" value="1"/>
</dbReference>
<dbReference type="InterPro" id="IPR016166">
    <property type="entry name" value="FAD-bd_PCMH"/>
</dbReference>
<dbReference type="InterPro" id="IPR036318">
    <property type="entry name" value="FAD-bd_PCMH-like_sf"/>
</dbReference>
<dbReference type="InterPro" id="IPR016167">
    <property type="entry name" value="FAD-bd_PCMH_sub1"/>
</dbReference>
<dbReference type="InterPro" id="IPR016169">
    <property type="entry name" value="FAD-bd_PCMH_sub2"/>
</dbReference>
<dbReference type="InterPro" id="IPR003170">
    <property type="entry name" value="MurB"/>
</dbReference>
<dbReference type="InterPro" id="IPR011601">
    <property type="entry name" value="MurB_C"/>
</dbReference>
<dbReference type="InterPro" id="IPR036635">
    <property type="entry name" value="MurB_C_sf"/>
</dbReference>
<dbReference type="InterPro" id="IPR006094">
    <property type="entry name" value="Oxid_FAD_bind_N"/>
</dbReference>
<dbReference type="NCBIfam" id="TIGR00179">
    <property type="entry name" value="murB"/>
    <property type="match status" value="1"/>
</dbReference>
<dbReference type="NCBIfam" id="NF010480">
    <property type="entry name" value="PRK13905.1"/>
    <property type="match status" value="1"/>
</dbReference>
<dbReference type="PANTHER" id="PTHR21071">
    <property type="entry name" value="UDP-N-ACETYLENOLPYRUVOYLGLUCOSAMINE REDUCTASE"/>
    <property type="match status" value="1"/>
</dbReference>
<dbReference type="PANTHER" id="PTHR21071:SF4">
    <property type="entry name" value="UDP-N-ACETYLENOLPYRUVOYLGLUCOSAMINE REDUCTASE"/>
    <property type="match status" value="1"/>
</dbReference>
<dbReference type="Pfam" id="PF01565">
    <property type="entry name" value="FAD_binding_4"/>
    <property type="match status" value="1"/>
</dbReference>
<dbReference type="Pfam" id="PF02873">
    <property type="entry name" value="MurB_C"/>
    <property type="match status" value="1"/>
</dbReference>
<dbReference type="SUPFAM" id="SSF56176">
    <property type="entry name" value="FAD-binding/transporter-associated domain-like"/>
    <property type="match status" value="1"/>
</dbReference>
<dbReference type="SUPFAM" id="SSF56194">
    <property type="entry name" value="Uridine diphospho-N-Acetylenolpyruvylglucosamine reductase, MurB, C-terminal domain"/>
    <property type="match status" value="1"/>
</dbReference>
<dbReference type="PROSITE" id="PS51387">
    <property type="entry name" value="FAD_PCMH"/>
    <property type="match status" value="1"/>
</dbReference>
<sequence length="310" mass="34981">MKFERGLEKLNIEFLKDKPLKDFTTFKIGGKARYIVFPKNIDELIEIIKLVKESGINWRIVGNCSNVLVSDKGFDGAIITTTKMDFFKTEENLIEAECGCMISQVARKACENGLKGLEFAVGIPGTVGGAVYMNAGAYDSEIKDVFECAEVLDEDLNIFKLGKSDMRFSYRHSRLKEEKLILLKATFRLQYAREEDVPPIEKANEYNQRRREKQPLQYPSAGSIFKRPPGNFAGKLIEDAGLKGYRVGNACISGKHAGFIVNLGDALAEDVRKLIYHTQKSVYEKFGVLLEPEIEFIGEFETPLFEMSTK</sequence>
<organism>
    <name type="scientific">Caldicellulosiruptor saccharolyticus (strain ATCC 43494 / DSM 8903 / Tp8T 6331)</name>
    <dbReference type="NCBI Taxonomy" id="351627"/>
    <lineage>
        <taxon>Bacteria</taxon>
        <taxon>Bacillati</taxon>
        <taxon>Bacillota</taxon>
        <taxon>Bacillota incertae sedis</taxon>
        <taxon>Caldicellulosiruptorales</taxon>
        <taxon>Caldicellulosiruptoraceae</taxon>
        <taxon>Caldicellulosiruptor</taxon>
    </lineage>
</organism>
<evidence type="ECO:0000255" key="1">
    <source>
        <dbReference type="HAMAP-Rule" id="MF_00037"/>
    </source>
</evidence>
<keyword id="KW-0131">Cell cycle</keyword>
<keyword id="KW-0132">Cell division</keyword>
<keyword id="KW-0133">Cell shape</keyword>
<keyword id="KW-0961">Cell wall biogenesis/degradation</keyword>
<keyword id="KW-0963">Cytoplasm</keyword>
<keyword id="KW-0274">FAD</keyword>
<keyword id="KW-0285">Flavoprotein</keyword>
<keyword id="KW-0521">NADP</keyword>
<keyword id="KW-0560">Oxidoreductase</keyword>
<keyword id="KW-0573">Peptidoglycan synthesis</keyword>
<gene>
    <name evidence="1" type="primary">murB</name>
    <name type="ordered locus">Csac_1159</name>
</gene>
<accession>A4XIM9</accession>
<comment type="function">
    <text evidence="1">Cell wall formation.</text>
</comment>
<comment type="catalytic activity">
    <reaction evidence="1">
        <text>UDP-N-acetyl-alpha-D-muramate + NADP(+) = UDP-N-acetyl-3-O-(1-carboxyvinyl)-alpha-D-glucosamine + NADPH + H(+)</text>
        <dbReference type="Rhea" id="RHEA:12248"/>
        <dbReference type="ChEBI" id="CHEBI:15378"/>
        <dbReference type="ChEBI" id="CHEBI:57783"/>
        <dbReference type="ChEBI" id="CHEBI:58349"/>
        <dbReference type="ChEBI" id="CHEBI:68483"/>
        <dbReference type="ChEBI" id="CHEBI:70757"/>
        <dbReference type="EC" id="1.3.1.98"/>
    </reaction>
</comment>
<comment type="cofactor">
    <cofactor evidence="1">
        <name>FAD</name>
        <dbReference type="ChEBI" id="CHEBI:57692"/>
    </cofactor>
</comment>
<comment type="pathway">
    <text evidence="1">Cell wall biogenesis; peptidoglycan biosynthesis.</text>
</comment>
<comment type="subcellular location">
    <subcellularLocation>
        <location evidence="1">Cytoplasm</location>
    </subcellularLocation>
</comment>
<comment type="similarity">
    <text evidence="1">Belongs to the MurB family.</text>
</comment>
<reference key="1">
    <citation type="submission" date="2007-04" db="EMBL/GenBank/DDBJ databases">
        <title>Genome sequence of the thermophilic hydrogen-producing bacterium Caldicellulosiruptor saccharolyticus DSM 8903.</title>
        <authorList>
            <person name="Copeland A."/>
            <person name="Lucas S."/>
            <person name="Lapidus A."/>
            <person name="Barry K."/>
            <person name="Detter J.C."/>
            <person name="Glavina del Rio T."/>
            <person name="Hammon N."/>
            <person name="Israni S."/>
            <person name="Dalin E."/>
            <person name="Tice H."/>
            <person name="Pitluck S."/>
            <person name="Kiss H."/>
            <person name="Brettin T."/>
            <person name="Bruce D."/>
            <person name="Han C."/>
            <person name="Schmutz J."/>
            <person name="Larimer F."/>
            <person name="Land M."/>
            <person name="Hauser L."/>
            <person name="Kyrpides N."/>
            <person name="Lykidis A."/>
            <person name="van de Werken H.J.G."/>
            <person name="Verhaart M.R.A."/>
            <person name="VanFossen A.L."/>
            <person name="Lewis D.L."/>
            <person name="Nichols J.D."/>
            <person name="Goorissen H.P."/>
            <person name="van Niel E.W.J."/>
            <person name="Stams F.J.M."/>
            <person name="Willquist K.U."/>
            <person name="Ward D.E."/>
            <person name="van der Oost J."/>
            <person name="Kelly R.M."/>
            <person name="Kengen S.M.W."/>
            <person name="Richardson P."/>
        </authorList>
    </citation>
    <scope>NUCLEOTIDE SEQUENCE [LARGE SCALE GENOMIC DNA]</scope>
    <source>
        <strain>ATCC 43494 / DSM 8903 / Tp8T 6331</strain>
    </source>
</reference>
<protein>
    <recommendedName>
        <fullName evidence="1">UDP-N-acetylenolpyruvoylglucosamine reductase</fullName>
        <ecNumber evidence="1">1.3.1.98</ecNumber>
    </recommendedName>
    <alternativeName>
        <fullName evidence="1">UDP-N-acetylmuramate dehydrogenase</fullName>
    </alternativeName>
</protein>
<proteinExistence type="inferred from homology"/>
<name>MURB_CALS8</name>